<reference key="1">
    <citation type="journal article" date="2009" name="Proc. Natl. Acad. Sci. U.S.A.">
        <title>The mosaic genome structure of the Wolbachia wRi strain infecting Drosophila simulans.</title>
        <authorList>
            <person name="Klasson L."/>
            <person name="Westberg J."/>
            <person name="Sapountzis P."/>
            <person name="Naeslund K."/>
            <person name="Lutnaes Y."/>
            <person name="Darby A.C."/>
            <person name="Veneti Z."/>
            <person name="Chen L."/>
            <person name="Braig H.R."/>
            <person name="Garrett R."/>
            <person name="Bourtzis K."/>
            <person name="Andersson S.G."/>
        </authorList>
    </citation>
    <scope>NUCLEOTIDE SEQUENCE [LARGE SCALE GENOMIC DNA]</scope>
    <source>
        <strain>wRi</strain>
    </source>
</reference>
<sequence>MFIPKKSKYKKVFKGRIKGNTKGGSTLSFGDYGLKAMEAGRIQSKHIETARRVISRTLKRSGKVWIRIFPDTPVSKKPADVRMGKGKGSVEFWVFKAKPGRMLFEISSDVPMHLARLALEKATAKLPMKCKFVSNHN</sequence>
<accession>C0R302</accession>
<proteinExistence type="inferred from homology"/>
<evidence type="ECO:0000255" key="1">
    <source>
        <dbReference type="HAMAP-Rule" id="MF_01342"/>
    </source>
</evidence>
<evidence type="ECO:0000305" key="2"/>
<gene>
    <name evidence="1" type="primary">rplP</name>
    <name type="ordered locus">WRi_005120</name>
</gene>
<protein>
    <recommendedName>
        <fullName evidence="1">Large ribosomal subunit protein uL16</fullName>
    </recommendedName>
    <alternativeName>
        <fullName evidence="2">50S ribosomal protein L16</fullName>
    </alternativeName>
</protein>
<feature type="chain" id="PRO_1000166391" description="Large ribosomal subunit protein uL16">
    <location>
        <begin position="1"/>
        <end position="137"/>
    </location>
</feature>
<name>RL16_WOLWR</name>
<dbReference type="EMBL" id="CP001391">
    <property type="protein sequence ID" value="ACN95294.1"/>
    <property type="molecule type" value="Genomic_DNA"/>
</dbReference>
<dbReference type="RefSeq" id="WP_010962752.1">
    <property type="nucleotide sequence ID" value="NZ_MKIF01000201.1"/>
</dbReference>
<dbReference type="SMR" id="C0R302"/>
<dbReference type="STRING" id="66084.WRi_005120"/>
<dbReference type="GeneID" id="70036157"/>
<dbReference type="KEGG" id="wri:WRi_005120"/>
<dbReference type="HOGENOM" id="CLU_078858_2_1_5"/>
<dbReference type="Proteomes" id="UP000001293">
    <property type="component" value="Chromosome"/>
</dbReference>
<dbReference type="GO" id="GO:0022625">
    <property type="term" value="C:cytosolic large ribosomal subunit"/>
    <property type="evidence" value="ECO:0007669"/>
    <property type="project" value="TreeGrafter"/>
</dbReference>
<dbReference type="GO" id="GO:0019843">
    <property type="term" value="F:rRNA binding"/>
    <property type="evidence" value="ECO:0007669"/>
    <property type="project" value="UniProtKB-UniRule"/>
</dbReference>
<dbReference type="GO" id="GO:0003735">
    <property type="term" value="F:structural constituent of ribosome"/>
    <property type="evidence" value="ECO:0007669"/>
    <property type="project" value="InterPro"/>
</dbReference>
<dbReference type="GO" id="GO:0000049">
    <property type="term" value="F:tRNA binding"/>
    <property type="evidence" value="ECO:0007669"/>
    <property type="project" value="UniProtKB-KW"/>
</dbReference>
<dbReference type="GO" id="GO:0006412">
    <property type="term" value="P:translation"/>
    <property type="evidence" value="ECO:0007669"/>
    <property type="project" value="UniProtKB-UniRule"/>
</dbReference>
<dbReference type="CDD" id="cd01433">
    <property type="entry name" value="Ribosomal_L16_L10e"/>
    <property type="match status" value="1"/>
</dbReference>
<dbReference type="FunFam" id="3.90.1170.10:FF:000001">
    <property type="entry name" value="50S ribosomal protein L16"/>
    <property type="match status" value="1"/>
</dbReference>
<dbReference type="Gene3D" id="3.90.1170.10">
    <property type="entry name" value="Ribosomal protein L10e/L16"/>
    <property type="match status" value="1"/>
</dbReference>
<dbReference type="HAMAP" id="MF_01342">
    <property type="entry name" value="Ribosomal_uL16"/>
    <property type="match status" value="1"/>
</dbReference>
<dbReference type="InterPro" id="IPR047873">
    <property type="entry name" value="Ribosomal_uL16"/>
</dbReference>
<dbReference type="InterPro" id="IPR000114">
    <property type="entry name" value="Ribosomal_uL16_bact-type"/>
</dbReference>
<dbReference type="InterPro" id="IPR020798">
    <property type="entry name" value="Ribosomal_uL16_CS"/>
</dbReference>
<dbReference type="InterPro" id="IPR016180">
    <property type="entry name" value="Ribosomal_uL16_dom"/>
</dbReference>
<dbReference type="InterPro" id="IPR036920">
    <property type="entry name" value="Ribosomal_uL16_sf"/>
</dbReference>
<dbReference type="NCBIfam" id="TIGR01164">
    <property type="entry name" value="rplP_bact"/>
    <property type="match status" value="1"/>
</dbReference>
<dbReference type="PANTHER" id="PTHR12220">
    <property type="entry name" value="50S/60S RIBOSOMAL PROTEIN L16"/>
    <property type="match status" value="1"/>
</dbReference>
<dbReference type="PANTHER" id="PTHR12220:SF13">
    <property type="entry name" value="LARGE RIBOSOMAL SUBUNIT PROTEIN UL16M"/>
    <property type="match status" value="1"/>
</dbReference>
<dbReference type="Pfam" id="PF00252">
    <property type="entry name" value="Ribosomal_L16"/>
    <property type="match status" value="1"/>
</dbReference>
<dbReference type="PRINTS" id="PR00060">
    <property type="entry name" value="RIBOSOMALL16"/>
</dbReference>
<dbReference type="SUPFAM" id="SSF54686">
    <property type="entry name" value="Ribosomal protein L16p/L10e"/>
    <property type="match status" value="1"/>
</dbReference>
<dbReference type="PROSITE" id="PS00586">
    <property type="entry name" value="RIBOSOMAL_L16_1"/>
    <property type="match status" value="1"/>
</dbReference>
<dbReference type="PROSITE" id="PS00701">
    <property type="entry name" value="RIBOSOMAL_L16_2"/>
    <property type="match status" value="1"/>
</dbReference>
<keyword id="KW-0687">Ribonucleoprotein</keyword>
<keyword id="KW-0689">Ribosomal protein</keyword>
<keyword id="KW-0694">RNA-binding</keyword>
<keyword id="KW-0699">rRNA-binding</keyword>
<keyword id="KW-0820">tRNA-binding</keyword>
<comment type="function">
    <text evidence="1">Binds 23S rRNA and is also seen to make contacts with the A and possibly P site tRNAs.</text>
</comment>
<comment type="subunit">
    <text evidence="1">Part of the 50S ribosomal subunit.</text>
</comment>
<comment type="similarity">
    <text evidence="1">Belongs to the universal ribosomal protein uL16 family.</text>
</comment>
<organism>
    <name type="scientific">Wolbachia sp. subsp. Drosophila simulans (strain wRi)</name>
    <dbReference type="NCBI Taxonomy" id="66084"/>
    <lineage>
        <taxon>Bacteria</taxon>
        <taxon>Pseudomonadati</taxon>
        <taxon>Pseudomonadota</taxon>
        <taxon>Alphaproteobacteria</taxon>
        <taxon>Rickettsiales</taxon>
        <taxon>Anaplasmataceae</taxon>
        <taxon>Wolbachieae</taxon>
        <taxon>Wolbachia</taxon>
    </lineage>
</organism>